<organism>
    <name type="scientific">Bifidobacterium longum (strain NCC 2705)</name>
    <dbReference type="NCBI Taxonomy" id="206672"/>
    <lineage>
        <taxon>Bacteria</taxon>
        <taxon>Bacillati</taxon>
        <taxon>Actinomycetota</taxon>
        <taxon>Actinomycetes</taxon>
        <taxon>Bifidobacteriales</taxon>
        <taxon>Bifidobacteriaceae</taxon>
        <taxon>Bifidobacterium</taxon>
    </lineage>
</organism>
<gene>
    <name type="ordered locus">BL0043</name>
</gene>
<keyword id="KW-0067">ATP-binding</keyword>
<keyword id="KW-1003">Cell membrane</keyword>
<keyword id="KW-0472">Membrane</keyword>
<keyword id="KW-0547">Nucleotide-binding</keyword>
<keyword id="KW-1185">Reference proteome</keyword>
<keyword id="KW-0677">Repeat</keyword>
<keyword id="KW-1278">Translocase</keyword>
<keyword id="KW-0812">Transmembrane</keyword>
<keyword id="KW-1133">Transmembrane helix</keyword>
<keyword id="KW-0813">Transport</keyword>
<name>Y043_BIFLO</name>
<dbReference type="EC" id="7.-.-.-"/>
<dbReference type="EMBL" id="AE014295">
    <property type="protein sequence ID" value="AAN23910.1"/>
    <property type="status" value="ALT_INIT"/>
    <property type="molecule type" value="Genomic_DNA"/>
</dbReference>
<dbReference type="RefSeq" id="NP_695274.1">
    <property type="nucleotide sequence ID" value="NC_004307.2"/>
</dbReference>
<dbReference type="SMR" id="Q8G838"/>
<dbReference type="STRING" id="206672.BL0043"/>
<dbReference type="EnsemblBacteria" id="AAN23910">
    <property type="protein sequence ID" value="AAN23910"/>
    <property type="gene ID" value="BL0043"/>
</dbReference>
<dbReference type="KEGG" id="blo:BL0043"/>
<dbReference type="PATRIC" id="fig|206672.9.peg.45"/>
<dbReference type="HOGENOM" id="CLU_000604_38_1_11"/>
<dbReference type="OrthoDB" id="501320at2"/>
<dbReference type="Proteomes" id="UP000000439">
    <property type="component" value="Chromosome"/>
</dbReference>
<dbReference type="GO" id="GO:0043190">
    <property type="term" value="C:ATP-binding cassette (ABC) transporter complex"/>
    <property type="evidence" value="ECO:0007669"/>
    <property type="project" value="TreeGrafter"/>
</dbReference>
<dbReference type="GO" id="GO:0005524">
    <property type="term" value="F:ATP binding"/>
    <property type="evidence" value="ECO:0007669"/>
    <property type="project" value="UniProtKB-KW"/>
</dbReference>
<dbReference type="GO" id="GO:0016887">
    <property type="term" value="F:ATP hydrolysis activity"/>
    <property type="evidence" value="ECO:0007669"/>
    <property type="project" value="InterPro"/>
</dbReference>
<dbReference type="GO" id="GO:0042626">
    <property type="term" value="F:ATPase-coupled transmembrane transporter activity"/>
    <property type="evidence" value="ECO:0007669"/>
    <property type="project" value="TreeGrafter"/>
</dbReference>
<dbReference type="CDD" id="cd03225">
    <property type="entry name" value="ABC_cobalt_CbiO_domain1"/>
    <property type="match status" value="2"/>
</dbReference>
<dbReference type="CDD" id="cd16914">
    <property type="entry name" value="EcfT"/>
    <property type="match status" value="1"/>
</dbReference>
<dbReference type="FunFam" id="3.40.50.300:FF:000224">
    <property type="entry name" value="Energy-coupling factor transporter ATP-binding protein EcfA"/>
    <property type="match status" value="1"/>
</dbReference>
<dbReference type="Gene3D" id="3.40.50.300">
    <property type="entry name" value="P-loop containing nucleotide triphosphate hydrolases"/>
    <property type="match status" value="2"/>
</dbReference>
<dbReference type="InterPro" id="IPR003593">
    <property type="entry name" value="AAA+_ATPase"/>
</dbReference>
<dbReference type="InterPro" id="IPR003339">
    <property type="entry name" value="ABC/ECF_trnsptr_transmembrane"/>
</dbReference>
<dbReference type="InterPro" id="IPR003439">
    <property type="entry name" value="ABC_transporter-like_ATP-bd"/>
</dbReference>
<dbReference type="InterPro" id="IPR017871">
    <property type="entry name" value="ABC_transporter-like_CS"/>
</dbReference>
<dbReference type="InterPro" id="IPR015856">
    <property type="entry name" value="ABC_transpr_CbiO/EcfA_su"/>
</dbReference>
<dbReference type="InterPro" id="IPR050095">
    <property type="entry name" value="ECF_ABC_transporter_ATP-bd"/>
</dbReference>
<dbReference type="InterPro" id="IPR027417">
    <property type="entry name" value="P-loop_NTPase"/>
</dbReference>
<dbReference type="NCBIfam" id="NF010167">
    <property type="entry name" value="PRK13648.1"/>
    <property type="match status" value="2"/>
</dbReference>
<dbReference type="PANTHER" id="PTHR43553:SF24">
    <property type="entry name" value="ENERGY-COUPLING FACTOR TRANSPORTER ATP-BINDING PROTEIN ECFA1"/>
    <property type="match status" value="1"/>
</dbReference>
<dbReference type="PANTHER" id="PTHR43553">
    <property type="entry name" value="HEAVY METAL TRANSPORTER"/>
    <property type="match status" value="1"/>
</dbReference>
<dbReference type="Pfam" id="PF00005">
    <property type="entry name" value="ABC_tran"/>
    <property type="match status" value="2"/>
</dbReference>
<dbReference type="Pfam" id="PF02361">
    <property type="entry name" value="CbiQ"/>
    <property type="match status" value="1"/>
</dbReference>
<dbReference type="SMART" id="SM00382">
    <property type="entry name" value="AAA"/>
    <property type="match status" value="2"/>
</dbReference>
<dbReference type="SUPFAM" id="SSF52540">
    <property type="entry name" value="P-loop containing nucleoside triphosphate hydrolases"/>
    <property type="match status" value="2"/>
</dbReference>
<dbReference type="PROSITE" id="PS00211">
    <property type="entry name" value="ABC_TRANSPORTER_1"/>
    <property type="match status" value="2"/>
</dbReference>
<dbReference type="PROSITE" id="PS50893">
    <property type="entry name" value="ABC_TRANSPORTER_2"/>
    <property type="match status" value="2"/>
</dbReference>
<sequence>MLKDIRFSYDRGTSWALDGVSLTVHAGERLCLVGPNGSGKSTLARLIAGLTAPDGGEVTLLGQRVYAAGPNADAYRAARHGIGMVFQNPEDQLVTTVLEDDVAFGPENLGLERELIGERIVDSLQAVGLANLRQSDPTRMSGGQQQRASIAGMLAMNPAMLVLDEPTAMLDESARAEVMRILDDLQARGTTIVHVTHHPDETVHADRIVHMEAGRIIGITAAVDNRSPLAEAVSQSETEGSIGTEAAPSRPTNDSPRQREREDGSELPLLSDGIGDMTNPIIRVSHLTYRYPSAKRAVIDDLSFTIARGETVALMGVNGSGKSTLVRMLCALTAPTAGSIEVAGVPVASTGKRGRNVRPKSANRKQLAQLRRHVGYVMQHPEHQLFADTVAEDVAYGPRNQGLGETEVADRVRESLELLHIGHLADRSPFDLSGGQQRLAAIAGVLACNPDVLIMDEPTASLDAQAKKRIHELLRTLKSRGVTVLIITHDREEAEQIADRVVRMPIAAPASGGPVTATVTEPAVSSNGPAHSVIHRLDPRVKMVGFLAAMFTMFAVNTPTQLALGIAITLAVIAAARLNPLRVLESIHPILILLVLMGVVNLFVVRTGTPVVALGPLSITDQGVTIAVLYACRFALVIILGAVFLTTTTPTAMTDAFATLISPLNRLGIHAQEIALVMSLALRFIPTLTDETRAIVDAQSARGGSIETGSLAQRIKAMSAIIVPIFAGTLRHADNLSLALDARCYEEGIRRTHWRALTIAARDLIFAAAVIIYIAAIIAL</sequence>
<accession>Q8G838</accession>
<evidence type="ECO:0000250" key="1"/>
<evidence type="ECO:0000255" key="2"/>
<evidence type="ECO:0000255" key="3">
    <source>
        <dbReference type="PROSITE-ProRule" id="PRU00434"/>
    </source>
</evidence>
<evidence type="ECO:0000256" key="4">
    <source>
        <dbReference type="SAM" id="MobiDB-lite"/>
    </source>
</evidence>
<evidence type="ECO:0000305" key="5"/>
<proteinExistence type="inferred from homology"/>
<reference key="1">
    <citation type="journal article" date="2002" name="Proc. Natl. Acad. Sci. U.S.A.">
        <title>The genome sequence of Bifidobacterium longum reflects its adaptation to the human gastrointestinal tract.</title>
        <authorList>
            <person name="Schell M.A."/>
            <person name="Karmirantzou M."/>
            <person name="Snel B."/>
            <person name="Vilanova D."/>
            <person name="Berger B."/>
            <person name="Pessi G."/>
            <person name="Zwahlen M.-C."/>
            <person name="Desiere F."/>
            <person name="Bork P."/>
            <person name="Delley M."/>
            <person name="Pridmore R.D."/>
            <person name="Arigoni F."/>
        </authorList>
    </citation>
    <scope>NUCLEOTIDE SEQUENCE [LARGE SCALE GENOMIC DNA]</scope>
    <source>
        <strain>NCC 2705</strain>
    </source>
</reference>
<feature type="chain" id="PRO_0000091991" description="Putative ABC transporter ATP-binding protein BL0043">
    <location>
        <begin position="1"/>
        <end position="780"/>
    </location>
</feature>
<feature type="transmembrane region" description="Helical" evidence="2">
    <location>
        <begin position="551"/>
        <end position="573"/>
    </location>
</feature>
<feature type="transmembrane region" description="Helical" evidence="2">
    <location>
        <begin position="586"/>
        <end position="608"/>
    </location>
</feature>
<feature type="transmembrane region" description="Helical" evidence="2">
    <location>
        <begin position="623"/>
        <end position="645"/>
    </location>
</feature>
<feature type="transmembrane region" description="Helical" evidence="2">
    <location>
        <begin position="759"/>
        <end position="778"/>
    </location>
</feature>
<feature type="domain" description="ABC transporter 1" evidence="3">
    <location>
        <begin position="2"/>
        <end position="238"/>
    </location>
</feature>
<feature type="domain" description="ABC transporter 2" evidence="3">
    <location>
        <begin position="282"/>
        <end position="531"/>
    </location>
</feature>
<feature type="region of interest" description="Disordered" evidence="4">
    <location>
        <begin position="230"/>
        <end position="272"/>
    </location>
</feature>
<feature type="binding site" evidence="3">
    <location>
        <begin position="34"/>
        <end position="41"/>
    </location>
    <ligand>
        <name>ATP</name>
        <dbReference type="ChEBI" id="CHEBI:30616"/>
        <label>1</label>
    </ligand>
</feature>
<feature type="binding site" evidence="3">
    <location>
        <begin position="316"/>
        <end position="323"/>
    </location>
    <ligand>
        <name>ATP</name>
        <dbReference type="ChEBI" id="CHEBI:30616"/>
        <label>2</label>
    </ligand>
</feature>
<protein>
    <recommendedName>
        <fullName>Putative ABC transporter ATP-binding protein BL0043</fullName>
        <ecNumber>7.-.-.-</ecNumber>
    </recommendedName>
</protein>
<comment type="function">
    <text evidence="1">Probably part of an ABC transporter complex. Responsible for energy coupling to the transport system (By similarity).</text>
</comment>
<comment type="subcellular location">
    <subcellularLocation>
        <location evidence="1">Cell membrane</location>
        <topology evidence="1">Multi-pass membrane protein</topology>
    </subcellularLocation>
</comment>
<comment type="similarity">
    <text evidence="5">Belongs to the ABC transporter superfamily.</text>
</comment>
<comment type="caution">
    <text evidence="5">The fusion between the ATP-binding domains and one of the transmembrane domain is unusual. It could be due to a sequencing error.</text>
</comment>
<comment type="sequence caution" evidence="5">
    <conflict type="erroneous initiation">
        <sequence resource="EMBL-CDS" id="AAN23910"/>
    </conflict>
</comment>